<feature type="chain" id="PRO_1000117052" description="Transcription antitermination protein NusB">
    <location>
        <begin position="1"/>
        <end position="139"/>
    </location>
</feature>
<dbReference type="EMBL" id="CU928163">
    <property type="protein sequence ID" value="CAR11669.1"/>
    <property type="molecule type" value="Genomic_DNA"/>
</dbReference>
<dbReference type="RefSeq" id="WP_000801125.1">
    <property type="nucleotide sequence ID" value="NC_011751.1"/>
</dbReference>
<dbReference type="RefSeq" id="YP_002411217.1">
    <property type="nucleotide sequence ID" value="NC_011751.1"/>
</dbReference>
<dbReference type="SMR" id="B7N8W8"/>
<dbReference type="STRING" id="585056.ECUMN_0454"/>
<dbReference type="GeneID" id="93777044"/>
<dbReference type="KEGG" id="eum:ECUMN_0454"/>
<dbReference type="PATRIC" id="fig|585056.7.peg.657"/>
<dbReference type="HOGENOM" id="CLU_087843_4_1_6"/>
<dbReference type="Proteomes" id="UP000007097">
    <property type="component" value="Chromosome"/>
</dbReference>
<dbReference type="GO" id="GO:0005829">
    <property type="term" value="C:cytosol"/>
    <property type="evidence" value="ECO:0007669"/>
    <property type="project" value="TreeGrafter"/>
</dbReference>
<dbReference type="GO" id="GO:0003723">
    <property type="term" value="F:RNA binding"/>
    <property type="evidence" value="ECO:0007669"/>
    <property type="project" value="UniProtKB-UniRule"/>
</dbReference>
<dbReference type="GO" id="GO:0006353">
    <property type="term" value="P:DNA-templated transcription termination"/>
    <property type="evidence" value="ECO:0007669"/>
    <property type="project" value="UniProtKB-UniRule"/>
</dbReference>
<dbReference type="GO" id="GO:0031564">
    <property type="term" value="P:transcription antitermination"/>
    <property type="evidence" value="ECO:0007669"/>
    <property type="project" value="UniProtKB-KW"/>
</dbReference>
<dbReference type="CDD" id="cd00619">
    <property type="entry name" value="Terminator_NusB"/>
    <property type="match status" value="1"/>
</dbReference>
<dbReference type="FunFam" id="1.10.940.10:FF:000001">
    <property type="entry name" value="Transcription antitermination factor NusB"/>
    <property type="match status" value="1"/>
</dbReference>
<dbReference type="Gene3D" id="1.10.940.10">
    <property type="entry name" value="NusB-like"/>
    <property type="match status" value="1"/>
</dbReference>
<dbReference type="HAMAP" id="MF_00073">
    <property type="entry name" value="NusB"/>
    <property type="match status" value="1"/>
</dbReference>
<dbReference type="InterPro" id="IPR035926">
    <property type="entry name" value="NusB-like_sf"/>
</dbReference>
<dbReference type="InterPro" id="IPR011605">
    <property type="entry name" value="NusB_fam"/>
</dbReference>
<dbReference type="InterPro" id="IPR006027">
    <property type="entry name" value="NusB_RsmB_TIM44"/>
</dbReference>
<dbReference type="NCBIfam" id="TIGR01951">
    <property type="entry name" value="nusB"/>
    <property type="match status" value="1"/>
</dbReference>
<dbReference type="PANTHER" id="PTHR11078:SF3">
    <property type="entry name" value="ANTITERMINATION NUSB DOMAIN-CONTAINING PROTEIN"/>
    <property type="match status" value="1"/>
</dbReference>
<dbReference type="PANTHER" id="PTHR11078">
    <property type="entry name" value="N UTILIZATION SUBSTANCE PROTEIN B-RELATED"/>
    <property type="match status" value="1"/>
</dbReference>
<dbReference type="Pfam" id="PF01029">
    <property type="entry name" value="NusB"/>
    <property type="match status" value="1"/>
</dbReference>
<dbReference type="SUPFAM" id="SSF48013">
    <property type="entry name" value="NusB-like"/>
    <property type="match status" value="1"/>
</dbReference>
<evidence type="ECO:0000255" key="1">
    <source>
        <dbReference type="HAMAP-Rule" id="MF_00073"/>
    </source>
</evidence>
<name>NUSB_ECOLU</name>
<keyword id="KW-0694">RNA-binding</keyword>
<keyword id="KW-0804">Transcription</keyword>
<keyword id="KW-0889">Transcription antitermination</keyword>
<keyword id="KW-0805">Transcription regulation</keyword>
<sequence>MKPAARRRARECAVQALYSWQLSQNDIADVEYQFLAEQDVKDVDVLYFRELLAGVATNTAYLDGLMKPYLSRLLEELGQVEKAVLRIALYELSKRSDVPYKVAINEAIELAKSFGAEDSHKFVNGVLDKAAPVIRPNKK</sequence>
<protein>
    <recommendedName>
        <fullName evidence="1">Transcription antitermination protein NusB</fullName>
    </recommendedName>
    <alternativeName>
        <fullName evidence="1">Antitermination factor NusB</fullName>
    </alternativeName>
</protein>
<accession>B7N8W8</accession>
<reference key="1">
    <citation type="journal article" date="2009" name="PLoS Genet.">
        <title>Organised genome dynamics in the Escherichia coli species results in highly diverse adaptive paths.</title>
        <authorList>
            <person name="Touchon M."/>
            <person name="Hoede C."/>
            <person name="Tenaillon O."/>
            <person name="Barbe V."/>
            <person name="Baeriswyl S."/>
            <person name="Bidet P."/>
            <person name="Bingen E."/>
            <person name="Bonacorsi S."/>
            <person name="Bouchier C."/>
            <person name="Bouvet O."/>
            <person name="Calteau A."/>
            <person name="Chiapello H."/>
            <person name="Clermont O."/>
            <person name="Cruveiller S."/>
            <person name="Danchin A."/>
            <person name="Diard M."/>
            <person name="Dossat C."/>
            <person name="Karoui M.E."/>
            <person name="Frapy E."/>
            <person name="Garry L."/>
            <person name="Ghigo J.M."/>
            <person name="Gilles A.M."/>
            <person name="Johnson J."/>
            <person name="Le Bouguenec C."/>
            <person name="Lescat M."/>
            <person name="Mangenot S."/>
            <person name="Martinez-Jehanne V."/>
            <person name="Matic I."/>
            <person name="Nassif X."/>
            <person name="Oztas S."/>
            <person name="Petit M.A."/>
            <person name="Pichon C."/>
            <person name="Rouy Z."/>
            <person name="Ruf C.S."/>
            <person name="Schneider D."/>
            <person name="Tourret J."/>
            <person name="Vacherie B."/>
            <person name="Vallenet D."/>
            <person name="Medigue C."/>
            <person name="Rocha E.P.C."/>
            <person name="Denamur E."/>
        </authorList>
    </citation>
    <scope>NUCLEOTIDE SEQUENCE [LARGE SCALE GENOMIC DNA]</scope>
    <source>
        <strain>UMN026 / ExPEC</strain>
    </source>
</reference>
<organism>
    <name type="scientific">Escherichia coli O17:K52:H18 (strain UMN026 / ExPEC)</name>
    <dbReference type="NCBI Taxonomy" id="585056"/>
    <lineage>
        <taxon>Bacteria</taxon>
        <taxon>Pseudomonadati</taxon>
        <taxon>Pseudomonadota</taxon>
        <taxon>Gammaproteobacteria</taxon>
        <taxon>Enterobacterales</taxon>
        <taxon>Enterobacteriaceae</taxon>
        <taxon>Escherichia</taxon>
    </lineage>
</organism>
<proteinExistence type="inferred from homology"/>
<comment type="function">
    <text evidence="1">Involved in transcription antitermination. Required for transcription of ribosomal RNA (rRNA) genes. Binds specifically to the boxA antiterminator sequence of the ribosomal RNA (rrn) operons.</text>
</comment>
<comment type="similarity">
    <text evidence="1">Belongs to the NusB family.</text>
</comment>
<gene>
    <name evidence="1" type="primary">nusB</name>
    <name type="ordered locus">ECUMN_0454</name>
</gene>